<comment type="function">
    <text evidence="1">ATP-binding RNA helicase involved in the biogenesis of 60S ribosomal subunits and is required for the normal formation of 25S and 5.8S rRNAs.</text>
</comment>
<comment type="catalytic activity">
    <reaction>
        <text>ATP + H2O = ADP + phosphate + H(+)</text>
        <dbReference type="Rhea" id="RHEA:13065"/>
        <dbReference type="ChEBI" id="CHEBI:15377"/>
        <dbReference type="ChEBI" id="CHEBI:15378"/>
        <dbReference type="ChEBI" id="CHEBI:30616"/>
        <dbReference type="ChEBI" id="CHEBI:43474"/>
        <dbReference type="ChEBI" id="CHEBI:456216"/>
        <dbReference type="EC" id="3.6.4.13"/>
    </reaction>
</comment>
<comment type="subcellular location">
    <subcellularLocation>
        <location evidence="1">Nucleus</location>
        <location evidence="1">Nucleolus</location>
    </subcellularLocation>
</comment>
<comment type="domain">
    <text>The Q motif is unique to and characteristic of the DEAD box family of RNA helicases and controls ATP binding and hydrolysis.</text>
</comment>
<comment type="similarity">
    <text evidence="5">Belongs to the DEAD box helicase family. DDX54/DBP10 subfamily.</text>
</comment>
<protein>
    <recommendedName>
        <fullName>ATP-dependent RNA helicase dbp10</fullName>
        <ecNumber>3.6.4.13</ecNumber>
    </recommendedName>
</protein>
<name>DBP10_ASPTN</name>
<proteinExistence type="inferred from homology"/>
<accession>Q0CMM8</accession>
<feature type="chain" id="PRO_0000281715" description="ATP-dependent RNA helicase dbp10">
    <location>
        <begin position="1"/>
        <end position="928"/>
    </location>
</feature>
<feature type="domain" description="Helicase ATP-binding" evidence="2">
    <location>
        <begin position="120"/>
        <end position="292"/>
    </location>
</feature>
<feature type="domain" description="Helicase C-terminal" evidence="3">
    <location>
        <begin position="361"/>
        <end position="515"/>
    </location>
</feature>
<feature type="region of interest" description="Disordered" evidence="4">
    <location>
        <begin position="1"/>
        <end position="46"/>
    </location>
</feature>
<feature type="region of interest" description="Disordered" evidence="4">
    <location>
        <begin position="342"/>
        <end position="368"/>
    </location>
</feature>
<feature type="region of interest" description="Disordered" evidence="4">
    <location>
        <begin position="616"/>
        <end position="713"/>
    </location>
</feature>
<feature type="region of interest" description="Disordered" evidence="4">
    <location>
        <begin position="780"/>
        <end position="802"/>
    </location>
</feature>
<feature type="region of interest" description="Disordered" evidence="4">
    <location>
        <begin position="833"/>
        <end position="928"/>
    </location>
</feature>
<feature type="short sequence motif" description="Q motif">
    <location>
        <begin position="89"/>
        <end position="117"/>
    </location>
</feature>
<feature type="short sequence motif" description="DEAD box">
    <location>
        <begin position="240"/>
        <end position="243"/>
    </location>
</feature>
<feature type="compositionally biased region" description="Basic and acidic residues" evidence="4">
    <location>
        <begin position="342"/>
        <end position="353"/>
    </location>
</feature>
<feature type="compositionally biased region" description="Basic and acidic residues" evidence="4">
    <location>
        <begin position="621"/>
        <end position="630"/>
    </location>
</feature>
<feature type="compositionally biased region" description="Low complexity" evidence="4">
    <location>
        <begin position="657"/>
        <end position="672"/>
    </location>
</feature>
<feature type="compositionally biased region" description="Basic and acidic residues" evidence="4">
    <location>
        <begin position="789"/>
        <end position="802"/>
    </location>
</feature>
<feature type="compositionally biased region" description="Basic and acidic residues" evidence="4">
    <location>
        <begin position="859"/>
        <end position="887"/>
    </location>
</feature>
<feature type="compositionally biased region" description="Basic and acidic residues" evidence="4">
    <location>
        <begin position="899"/>
        <end position="909"/>
    </location>
</feature>
<feature type="compositionally biased region" description="Basic residues" evidence="4">
    <location>
        <begin position="910"/>
        <end position="928"/>
    </location>
</feature>
<feature type="binding site" evidence="2">
    <location>
        <begin position="133"/>
        <end position="140"/>
    </location>
    <ligand>
        <name>ATP</name>
        <dbReference type="ChEBI" id="CHEBI:30616"/>
    </ligand>
</feature>
<evidence type="ECO:0000250" key="1"/>
<evidence type="ECO:0000255" key="2">
    <source>
        <dbReference type="PROSITE-ProRule" id="PRU00541"/>
    </source>
</evidence>
<evidence type="ECO:0000255" key="3">
    <source>
        <dbReference type="PROSITE-ProRule" id="PRU00542"/>
    </source>
</evidence>
<evidence type="ECO:0000256" key="4">
    <source>
        <dbReference type="SAM" id="MobiDB-lite"/>
    </source>
</evidence>
<evidence type="ECO:0000305" key="5"/>
<gene>
    <name type="primary">dbp10</name>
    <name type="ORF">ATEG_05056</name>
</gene>
<reference key="1">
    <citation type="submission" date="2005-09" db="EMBL/GenBank/DDBJ databases">
        <title>Annotation of the Aspergillus terreus NIH2624 genome.</title>
        <authorList>
            <person name="Birren B.W."/>
            <person name="Lander E.S."/>
            <person name="Galagan J.E."/>
            <person name="Nusbaum C."/>
            <person name="Devon K."/>
            <person name="Henn M."/>
            <person name="Ma L.-J."/>
            <person name="Jaffe D.B."/>
            <person name="Butler J."/>
            <person name="Alvarez P."/>
            <person name="Gnerre S."/>
            <person name="Grabherr M."/>
            <person name="Kleber M."/>
            <person name="Mauceli E.W."/>
            <person name="Brockman W."/>
            <person name="Rounsley S."/>
            <person name="Young S.K."/>
            <person name="LaButti K."/>
            <person name="Pushparaj V."/>
            <person name="DeCaprio D."/>
            <person name="Crawford M."/>
            <person name="Koehrsen M."/>
            <person name="Engels R."/>
            <person name="Montgomery P."/>
            <person name="Pearson M."/>
            <person name="Howarth C."/>
            <person name="Larson L."/>
            <person name="Luoma S."/>
            <person name="White J."/>
            <person name="Alvarado L."/>
            <person name="Kodira C.D."/>
            <person name="Zeng Q."/>
            <person name="Oleary S."/>
            <person name="Yandava C."/>
            <person name="Denning D.W."/>
            <person name="Nierman W.C."/>
            <person name="Milne T."/>
            <person name="Madden K."/>
        </authorList>
    </citation>
    <scope>NUCLEOTIDE SEQUENCE [LARGE SCALE GENOMIC DNA]</scope>
    <source>
        <strain>NIH 2624 / FGSC A1156</strain>
    </source>
</reference>
<sequence>MPHRAASPAMSENEFDITNALFQNDGDSDNEVPVTKSKPQRKAAPQELDFLGGNVDDDDEDDEAFIAEQQTSANRKAANLKGRTVKKGGGFQAMGLNANLLKAITRKGFSVPTPIQRKTIPVIMDDRDVVGMARTGSGKTAAFVIPMIEKLKSHSSKFGARGLILSPSRELALQTLKVVKELGKGTDLKSVLLVGGDSLEEQFGMMAGNPDIVIATPGRFLHLKVEMNLDLSSIRYVVFDEADRLFEMGFAAQLTEILHGLPTTRQTLLFSATLPKSLVEFARAGLQEPTLIRLDTESKISPDLQNAFFSVKSADKEGALLYILHEVIKMPTGPTEVAQRLQEEKANSKDSKNSKKRKRSEMDKAVNMKESPTKHSTIVFAATKHHVDYLYSLLREAGFAVSYAYGSLDQTARKIQVNNFRTGLSNILVVTDVAARGIDIPILANVINYDFPSQPKIFVHRVGRTARAGRKGWSYSLVRDADAPYLLDLQLFLGRRLVLGREHGDQVDYAEDVVVGGFPRDSLAQNCEWVTRVLDDNRDIFSQRTVATKGEKLYMRTRNAASLESAKRSKSVVGSDHWTTIHPLFSDAETEMEIQREKMLARIGGYRPQETIFEVNNRRSGKPENEEALHTIKRVRSTLDSKKKRAQAEEQSELLEDASGGNEGEANGNPDAMSDDDIPDGVPDNMSMASESDLEVTFSSYSQSKSDKAKKDSTAAFQNPEYFMSYTPSSTNLAEDRAYGVHTGTNANFTQASRSVTMDLQLDEGARGFAEPRTMKRWDKRHKKYVSRQNDEDGSKGEHLVRGESGAKIAASFRSGKFDAWKKSKRLGRLPRVGEAEDTSLSAGLNSAMGGKRFRHHKDQAPKRADPLRDDFYKKKKKNEAAKERQMSRAGGAAAGGKSEIKNTDDIRLARKLKQKRREKNARPSRKK</sequence>
<dbReference type="EC" id="3.6.4.13"/>
<dbReference type="EMBL" id="CH476600">
    <property type="protein sequence ID" value="EAU34125.1"/>
    <property type="molecule type" value="Genomic_DNA"/>
</dbReference>
<dbReference type="RefSeq" id="XP_001214234.1">
    <property type="nucleotide sequence ID" value="XM_001214234.1"/>
</dbReference>
<dbReference type="SMR" id="Q0CMM8"/>
<dbReference type="STRING" id="341663.Q0CMM8"/>
<dbReference type="EnsemblFungi" id="EAU34125">
    <property type="protein sequence ID" value="EAU34125"/>
    <property type="gene ID" value="ATEG_05056"/>
</dbReference>
<dbReference type="GeneID" id="4321138"/>
<dbReference type="VEuPathDB" id="FungiDB:ATEG_05056"/>
<dbReference type="eggNOG" id="KOG0337">
    <property type="taxonomic scope" value="Eukaryota"/>
</dbReference>
<dbReference type="HOGENOM" id="CLU_003041_5_1_1"/>
<dbReference type="OMA" id="EDQFGMM"/>
<dbReference type="OrthoDB" id="10261375at2759"/>
<dbReference type="Proteomes" id="UP000007963">
    <property type="component" value="Unassembled WGS sequence"/>
</dbReference>
<dbReference type="GO" id="GO:0005829">
    <property type="term" value="C:cytosol"/>
    <property type="evidence" value="ECO:0007669"/>
    <property type="project" value="TreeGrafter"/>
</dbReference>
<dbReference type="GO" id="GO:0005730">
    <property type="term" value="C:nucleolus"/>
    <property type="evidence" value="ECO:0007669"/>
    <property type="project" value="UniProtKB-SubCell"/>
</dbReference>
<dbReference type="GO" id="GO:0005524">
    <property type="term" value="F:ATP binding"/>
    <property type="evidence" value="ECO:0007669"/>
    <property type="project" value="UniProtKB-KW"/>
</dbReference>
<dbReference type="GO" id="GO:0016887">
    <property type="term" value="F:ATP hydrolysis activity"/>
    <property type="evidence" value="ECO:0007669"/>
    <property type="project" value="RHEA"/>
</dbReference>
<dbReference type="GO" id="GO:0003723">
    <property type="term" value="F:RNA binding"/>
    <property type="evidence" value="ECO:0007669"/>
    <property type="project" value="UniProtKB-KW"/>
</dbReference>
<dbReference type="GO" id="GO:0003724">
    <property type="term" value="F:RNA helicase activity"/>
    <property type="evidence" value="ECO:0007669"/>
    <property type="project" value="UniProtKB-EC"/>
</dbReference>
<dbReference type="GO" id="GO:0006364">
    <property type="term" value="P:rRNA processing"/>
    <property type="evidence" value="ECO:0007669"/>
    <property type="project" value="UniProtKB-KW"/>
</dbReference>
<dbReference type="CDD" id="cd17959">
    <property type="entry name" value="DEADc_DDX54"/>
    <property type="match status" value="1"/>
</dbReference>
<dbReference type="CDD" id="cd18787">
    <property type="entry name" value="SF2_C_DEAD"/>
    <property type="match status" value="1"/>
</dbReference>
<dbReference type="FunFam" id="3.40.50.300:FF:000865">
    <property type="entry name" value="ATP-dependent RNA helicase DDX54"/>
    <property type="match status" value="1"/>
</dbReference>
<dbReference type="Gene3D" id="3.40.50.300">
    <property type="entry name" value="P-loop containing nucleotide triphosphate hydrolases"/>
    <property type="match status" value="2"/>
</dbReference>
<dbReference type="InterPro" id="IPR012541">
    <property type="entry name" value="DBP10_C"/>
</dbReference>
<dbReference type="InterPro" id="IPR033517">
    <property type="entry name" value="DDX54/DBP10_DEAD-box_helicase"/>
</dbReference>
<dbReference type="InterPro" id="IPR011545">
    <property type="entry name" value="DEAD/DEAH_box_helicase_dom"/>
</dbReference>
<dbReference type="InterPro" id="IPR050079">
    <property type="entry name" value="DEAD_box_RNA_helicase"/>
</dbReference>
<dbReference type="InterPro" id="IPR014001">
    <property type="entry name" value="Helicase_ATP-bd"/>
</dbReference>
<dbReference type="InterPro" id="IPR001650">
    <property type="entry name" value="Helicase_C-like"/>
</dbReference>
<dbReference type="InterPro" id="IPR027417">
    <property type="entry name" value="P-loop_NTPase"/>
</dbReference>
<dbReference type="InterPro" id="IPR000629">
    <property type="entry name" value="RNA-helicase_DEAD-box_CS"/>
</dbReference>
<dbReference type="InterPro" id="IPR014014">
    <property type="entry name" value="RNA_helicase_DEAD_Q_motif"/>
</dbReference>
<dbReference type="PANTHER" id="PTHR47959">
    <property type="entry name" value="ATP-DEPENDENT RNA HELICASE RHLE-RELATED"/>
    <property type="match status" value="1"/>
</dbReference>
<dbReference type="PANTHER" id="PTHR47959:SF8">
    <property type="entry name" value="RNA HELICASE"/>
    <property type="match status" value="1"/>
</dbReference>
<dbReference type="Pfam" id="PF08147">
    <property type="entry name" value="DBP10CT"/>
    <property type="match status" value="1"/>
</dbReference>
<dbReference type="Pfam" id="PF00270">
    <property type="entry name" value="DEAD"/>
    <property type="match status" value="1"/>
</dbReference>
<dbReference type="Pfam" id="PF00271">
    <property type="entry name" value="Helicase_C"/>
    <property type="match status" value="1"/>
</dbReference>
<dbReference type="SMART" id="SM01123">
    <property type="entry name" value="DBP10CT"/>
    <property type="match status" value="1"/>
</dbReference>
<dbReference type="SMART" id="SM00487">
    <property type="entry name" value="DEXDc"/>
    <property type="match status" value="1"/>
</dbReference>
<dbReference type="SMART" id="SM00490">
    <property type="entry name" value="HELICc"/>
    <property type="match status" value="1"/>
</dbReference>
<dbReference type="SUPFAM" id="SSF52540">
    <property type="entry name" value="P-loop containing nucleoside triphosphate hydrolases"/>
    <property type="match status" value="2"/>
</dbReference>
<dbReference type="PROSITE" id="PS00039">
    <property type="entry name" value="DEAD_ATP_HELICASE"/>
    <property type="match status" value="1"/>
</dbReference>
<dbReference type="PROSITE" id="PS51192">
    <property type="entry name" value="HELICASE_ATP_BIND_1"/>
    <property type="match status" value="1"/>
</dbReference>
<dbReference type="PROSITE" id="PS51194">
    <property type="entry name" value="HELICASE_CTER"/>
    <property type="match status" value="1"/>
</dbReference>
<dbReference type="PROSITE" id="PS51195">
    <property type="entry name" value="Q_MOTIF"/>
    <property type="match status" value="1"/>
</dbReference>
<organism>
    <name type="scientific">Aspergillus terreus (strain NIH 2624 / FGSC A1156)</name>
    <dbReference type="NCBI Taxonomy" id="341663"/>
    <lineage>
        <taxon>Eukaryota</taxon>
        <taxon>Fungi</taxon>
        <taxon>Dikarya</taxon>
        <taxon>Ascomycota</taxon>
        <taxon>Pezizomycotina</taxon>
        <taxon>Eurotiomycetes</taxon>
        <taxon>Eurotiomycetidae</taxon>
        <taxon>Eurotiales</taxon>
        <taxon>Aspergillaceae</taxon>
        <taxon>Aspergillus</taxon>
        <taxon>Aspergillus subgen. Circumdati</taxon>
    </lineage>
</organism>
<keyword id="KW-0067">ATP-binding</keyword>
<keyword id="KW-0347">Helicase</keyword>
<keyword id="KW-0378">Hydrolase</keyword>
<keyword id="KW-0547">Nucleotide-binding</keyword>
<keyword id="KW-0539">Nucleus</keyword>
<keyword id="KW-1185">Reference proteome</keyword>
<keyword id="KW-0690">Ribosome biogenesis</keyword>
<keyword id="KW-0694">RNA-binding</keyword>
<keyword id="KW-0698">rRNA processing</keyword>